<reference key="1">
    <citation type="journal article" date="2004" name="J. Bacteriol.">
        <title>The genome sequence of Mycoplasma hyopneumoniae strain 232, the agent of swine mycoplasmosis.</title>
        <authorList>
            <person name="Minion F.C."/>
            <person name="Lefkowitz E.J."/>
            <person name="Madsen M.L."/>
            <person name="Cleary B.J."/>
            <person name="Swartzell S.M."/>
            <person name="Mahairas G.G."/>
        </authorList>
    </citation>
    <scope>NUCLEOTIDE SEQUENCE [LARGE SCALE GENOMIC DNA]</scope>
    <source>
        <strain>232</strain>
    </source>
</reference>
<organism>
    <name type="scientific">Mesomycoplasma hyopneumoniae (strain 232)</name>
    <name type="common">Mycoplasma hyopneumoniae</name>
    <dbReference type="NCBI Taxonomy" id="295358"/>
    <lineage>
        <taxon>Bacteria</taxon>
        <taxon>Bacillati</taxon>
        <taxon>Mycoplasmatota</taxon>
        <taxon>Mycoplasmoidales</taxon>
        <taxon>Metamycoplasmataceae</taxon>
        <taxon>Mesomycoplasma</taxon>
    </lineage>
</organism>
<gene>
    <name evidence="1" type="primary">atpA</name>
    <name type="ordered locus">mhp053</name>
</gene>
<protein>
    <recommendedName>
        <fullName evidence="1">ATP synthase subunit alpha</fullName>
        <ecNumber evidence="1">7.1.2.2</ecNumber>
    </recommendedName>
    <alternativeName>
        <fullName evidence="1">ATP synthase F1 sector subunit alpha</fullName>
    </alternativeName>
    <alternativeName>
        <fullName evidence="1">F-ATPase subunit alpha</fullName>
    </alternativeName>
</protein>
<proteinExistence type="inferred from homology"/>
<evidence type="ECO:0000255" key="1">
    <source>
        <dbReference type="HAMAP-Rule" id="MF_01346"/>
    </source>
</evidence>
<comment type="function">
    <text evidence="1">Produces ATP from ADP in the presence of a proton gradient across the membrane. The alpha chain is a regulatory subunit.</text>
</comment>
<comment type="catalytic activity">
    <reaction evidence="1">
        <text>ATP + H2O + 4 H(+)(in) = ADP + phosphate + 5 H(+)(out)</text>
        <dbReference type="Rhea" id="RHEA:57720"/>
        <dbReference type="ChEBI" id="CHEBI:15377"/>
        <dbReference type="ChEBI" id="CHEBI:15378"/>
        <dbReference type="ChEBI" id="CHEBI:30616"/>
        <dbReference type="ChEBI" id="CHEBI:43474"/>
        <dbReference type="ChEBI" id="CHEBI:456216"/>
        <dbReference type="EC" id="7.1.2.2"/>
    </reaction>
</comment>
<comment type="subunit">
    <text evidence="1">F-type ATPases have 2 components, CF(1) - the catalytic core - and CF(0) - the membrane proton channel. CF(1) has five subunits: alpha(3), beta(3), gamma(1), delta(1), epsilon(1). CF(0) has three main subunits: a(1), b(2) and c(9-12). The alpha and beta chains form an alternating ring which encloses part of the gamma chain. CF(1) is attached to CF(0) by a central stalk formed by the gamma and epsilon chains, while a peripheral stalk is formed by the delta and b chains.</text>
</comment>
<comment type="subcellular location">
    <subcellularLocation>
        <location evidence="1">Cell membrane</location>
        <topology evidence="1">Peripheral membrane protein</topology>
    </subcellularLocation>
</comment>
<comment type="similarity">
    <text evidence="1">Belongs to the ATPase alpha/beta chains family.</text>
</comment>
<dbReference type="EC" id="7.1.2.2" evidence="1"/>
<dbReference type="EMBL" id="AE017332">
    <property type="protein sequence ID" value="AAV27378.1"/>
    <property type="molecule type" value="Genomic_DNA"/>
</dbReference>
<dbReference type="RefSeq" id="WP_011205892.1">
    <property type="nucleotide sequence ID" value="NC_006360.1"/>
</dbReference>
<dbReference type="SMR" id="Q601Z7"/>
<dbReference type="KEGG" id="mhy:mhp053"/>
<dbReference type="eggNOG" id="COG0056">
    <property type="taxonomic scope" value="Bacteria"/>
</dbReference>
<dbReference type="HOGENOM" id="CLU_010091_2_1_14"/>
<dbReference type="PhylomeDB" id="Q601Z7"/>
<dbReference type="Proteomes" id="UP000006822">
    <property type="component" value="Chromosome"/>
</dbReference>
<dbReference type="GO" id="GO:0005886">
    <property type="term" value="C:plasma membrane"/>
    <property type="evidence" value="ECO:0007669"/>
    <property type="project" value="UniProtKB-SubCell"/>
</dbReference>
<dbReference type="GO" id="GO:0045259">
    <property type="term" value="C:proton-transporting ATP synthase complex"/>
    <property type="evidence" value="ECO:0007669"/>
    <property type="project" value="UniProtKB-KW"/>
</dbReference>
<dbReference type="GO" id="GO:0043531">
    <property type="term" value="F:ADP binding"/>
    <property type="evidence" value="ECO:0007669"/>
    <property type="project" value="TreeGrafter"/>
</dbReference>
<dbReference type="GO" id="GO:0005524">
    <property type="term" value="F:ATP binding"/>
    <property type="evidence" value="ECO:0007669"/>
    <property type="project" value="UniProtKB-UniRule"/>
</dbReference>
<dbReference type="GO" id="GO:0046933">
    <property type="term" value="F:proton-transporting ATP synthase activity, rotational mechanism"/>
    <property type="evidence" value="ECO:0007669"/>
    <property type="project" value="UniProtKB-UniRule"/>
</dbReference>
<dbReference type="CDD" id="cd18113">
    <property type="entry name" value="ATP-synt_F1_alpha_C"/>
    <property type="match status" value="1"/>
</dbReference>
<dbReference type="CDD" id="cd18116">
    <property type="entry name" value="ATP-synt_F1_alpha_N"/>
    <property type="match status" value="1"/>
</dbReference>
<dbReference type="CDD" id="cd01132">
    <property type="entry name" value="F1-ATPase_alpha_CD"/>
    <property type="match status" value="1"/>
</dbReference>
<dbReference type="FunFam" id="3.40.50.300:FF:000002">
    <property type="entry name" value="ATP synthase subunit alpha"/>
    <property type="match status" value="1"/>
</dbReference>
<dbReference type="Gene3D" id="2.40.30.20">
    <property type="match status" value="1"/>
</dbReference>
<dbReference type="Gene3D" id="1.20.150.20">
    <property type="entry name" value="ATP synthase alpha/beta chain, C-terminal domain"/>
    <property type="match status" value="1"/>
</dbReference>
<dbReference type="Gene3D" id="3.40.50.300">
    <property type="entry name" value="P-loop containing nucleotide triphosphate hydrolases"/>
    <property type="match status" value="1"/>
</dbReference>
<dbReference type="HAMAP" id="MF_01346">
    <property type="entry name" value="ATP_synth_alpha_bact"/>
    <property type="match status" value="1"/>
</dbReference>
<dbReference type="InterPro" id="IPR023366">
    <property type="entry name" value="ATP_synth_asu-like_sf"/>
</dbReference>
<dbReference type="InterPro" id="IPR000793">
    <property type="entry name" value="ATP_synth_asu_C"/>
</dbReference>
<dbReference type="InterPro" id="IPR038376">
    <property type="entry name" value="ATP_synth_asu_C_sf"/>
</dbReference>
<dbReference type="InterPro" id="IPR033732">
    <property type="entry name" value="ATP_synth_F1_a_nt-bd_dom"/>
</dbReference>
<dbReference type="InterPro" id="IPR005294">
    <property type="entry name" value="ATP_synth_F1_asu"/>
</dbReference>
<dbReference type="InterPro" id="IPR020003">
    <property type="entry name" value="ATPase_a/bsu_AS"/>
</dbReference>
<dbReference type="InterPro" id="IPR004100">
    <property type="entry name" value="ATPase_F1/V1/A1_a/bsu_N"/>
</dbReference>
<dbReference type="InterPro" id="IPR036121">
    <property type="entry name" value="ATPase_F1/V1/A1_a/bsu_N_sf"/>
</dbReference>
<dbReference type="InterPro" id="IPR000194">
    <property type="entry name" value="ATPase_F1/V1/A1_a/bsu_nucl-bd"/>
</dbReference>
<dbReference type="InterPro" id="IPR027417">
    <property type="entry name" value="P-loop_NTPase"/>
</dbReference>
<dbReference type="NCBIfam" id="TIGR00962">
    <property type="entry name" value="atpA"/>
    <property type="match status" value="1"/>
</dbReference>
<dbReference type="NCBIfam" id="NF009884">
    <property type="entry name" value="PRK13343.1"/>
    <property type="match status" value="1"/>
</dbReference>
<dbReference type="PANTHER" id="PTHR48082">
    <property type="entry name" value="ATP SYNTHASE SUBUNIT ALPHA, MITOCHONDRIAL"/>
    <property type="match status" value="1"/>
</dbReference>
<dbReference type="PANTHER" id="PTHR48082:SF2">
    <property type="entry name" value="ATP SYNTHASE SUBUNIT ALPHA, MITOCHONDRIAL"/>
    <property type="match status" value="1"/>
</dbReference>
<dbReference type="Pfam" id="PF00006">
    <property type="entry name" value="ATP-synt_ab"/>
    <property type="match status" value="1"/>
</dbReference>
<dbReference type="Pfam" id="PF00306">
    <property type="entry name" value="ATP-synt_ab_C"/>
    <property type="match status" value="1"/>
</dbReference>
<dbReference type="Pfam" id="PF02874">
    <property type="entry name" value="ATP-synt_ab_N"/>
    <property type="match status" value="1"/>
</dbReference>
<dbReference type="SUPFAM" id="SSF47917">
    <property type="entry name" value="C-terminal domain of alpha and beta subunits of F1 ATP synthase"/>
    <property type="match status" value="1"/>
</dbReference>
<dbReference type="SUPFAM" id="SSF50615">
    <property type="entry name" value="N-terminal domain of alpha and beta subunits of F1 ATP synthase"/>
    <property type="match status" value="1"/>
</dbReference>
<dbReference type="SUPFAM" id="SSF52540">
    <property type="entry name" value="P-loop containing nucleoside triphosphate hydrolases"/>
    <property type="match status" value="1"/>
</dbReference>
<dbReference type="PROSITE" id="PS00152">
    <property type="entry name" value="ATPASE_ALPHA_BETA"/>
    <property type="match status" value="1"/>
</dbReference>
<accession>Q601Z7</accession>
<feature type="chain" id="PRO_0000238291" description="ATP synthase subunit alpha">
    <location>
        <begin position="1"/>
        <end position="507"/>
    </location>
</feature>
<feature type="binding site" evidence="1">
    <location>
        <begin position="168"/>
        <end position="175"/>
    </location>
    <ligand>
        <name>ATP</name>
        <dbReference type="ChEBI" id="CHEBI:30616"/>
    </ligand>
</feature>
<feature type="site" description="Required for activity" evidence="1">
    <location>
        <position position="361"/>
    </location>
</feature>
<keyword id="KW-0066">ATP synthesis</keyword>
<keyword id="KW-0067">ATP-binding</keyword>
<keyword id="KW-1003">Cell membrane</keyword>
<keyword id="KW-0139">CF(1)</keyword>
<keyword id="KW-0375">Hydrogen ion transport</keyword>
<keyword id="KW-0406">Ion transport</keyword>
<keyword id="KW-0472">Membrane</keyword>
<keyword id="KW-0547">Nucleotide-binding</keyword>
<keyword id="KW-1278">Translocase</keyword>
<keyword id="KW-0813">Transport</keyword>
<name>ATPA_MESH2</name>
<sequence length="507" mass="55733">MNKDINIAAIIKNEIENFEGKIQNHDIGKVIIVGDGVALVSGIEKVKFGELVEFENNVLGIALNLEQDLIGVVIMASENSVFQGSIVRRTKSVISITVGDQLLGRVVNALGIPIDGKAELDNSLKSAIFTNAPSIMDRKSVDRGLKTGILAIDSLVPIGKGQRELIIGDRQTGKTTIAIDAILNQKGKNVYCVYVAIGQKNSSVAQIVSLLEKKGAFEYTTVILAGASELSPLQYLAPYSGAAIAEYWMNKKKDVLIIYDDLSKHAIAYRTLSLLLRRPPGREAFPGDIFYQHSYLLERSAQLSNDKGGGSITALPIIETQAGDISAYIPTNVISITDGQIFLRDSLFNSGQKPAIDIGLSVSRVGSAAQTNLMKWASSSLKLNLAQYNELKAFAQFGSDLGPSSQLILDRGNKIYEILKQENQYPLTERQQIMLLILIRENLIDSLEQKSIPLFKSAFLKYCDSEPKFRDKIEKMDYNRVLEPNNLAGILKDITDFIEKFNLGNVF</sequence>